<gene>
    <name evidence="1" type="primary">pheT</name>
    <name type="ordered locus">SMU_1510</name>
</gene>
<dbReference type="EC" id="6.1.1.20" evidence="1"/>
<dbReference type="EMBL" id="AE014133">
    <property type="protein sequence ID" value="AAN59161.1"/>
    <property type="molecule type" value="Genomic_DNA"/>
</dbReference>
<dbReference type="RefSeq" id="NP_721855.1">
    <property type="nucleotide sequence ID" value="NC_004350.2"/>
</dbReference>
<dbReference type="RefSeq" id="WP_002352339.1">
    <property type="nucleotide sequence ID" value="NC_004350.2"/>
</dbReference>
<dbReference type="SMR" id="Q8CWX2"/>
<dbReference type="STRING" id="210007.SMU_1510"/>
<dbReference type="KEGG" id="smu:SMU_1510"/>
<dbReference type="PATRIC" id="fig|210007.7.peg.1343"/>
<dbReference type="eggNOG" id="COG0072">
    <property type="taxonomic scope" value="Bacteria"/>
</dbReference>
<dbReference type="eggNOG" id="COG0073">
    <property type="taxonomic scope" value="Bacteria"/>
</dbReference>
<dbReference type="HOGENOM" id="CLU_016891_0_0_9"/>
<dbReference type="OrthoDB" id="9805455at2"/>
<dbReference type="PhylomeDB" id="Q8CWX2"/>
<dbReference type="Proteomes" id="UP000002512">
    <property type="component" value="Chromosome"/>
</dbReference>
<dbReference type="GO" id="GO:0009328">
    <property type="term" value="C:phenylalanine-tRNA ligase complex"/>
    <property type="evidence" value="ECO:0007669"/>
    <property type="project" value="TreeGrafter"/>
</dbReference>
<dbReference type="GO" id="GO:0005524">
    <property type="term" value="F:ATP binding"/>
    <property type="evidence" value="ECO:0007669"/>
    <property type="project" value="UniProtKB-UniRule"/>
</dbReference>
<dbReference type="GO" id="GO:0140096">
    <property type="term" value="F:catalytic activity, acting on a protein"/>
    <property type="evidence" value="ECO:0007669"/>
    <property type="project" value="UniProtKB-ARBA"/>
</dbReference>
<dbReference type="GO" id="GO:0000287">
    <property type="term" value="F:magnesium ion binding"/>
    <property type="evidence" value="ECO:0007669"/>
    <property type="project" value="UniProtKB-UniRule"/>
</dbReference>
<dbReference type="GO" id="GO:0004826">
    <property type="term" value="F:phenylalanine-tRNA ligase activity"/>
    <property type="evidence" value="ECO:0007669"/>
    <property type="project" value="UniProtKB-UniRule"/>
</dbReference>
<dbReference type="GO" id="GO:0016740">
    <property type="term" value="F:transferase activity"/>
    <property type="evidence" value="ECO:0007669"/>
    <property type="project" value="UniProtKB-ARBA"/>
</dbReference>
<dbReference type="GO" id="GO:0000049">
    <property type="term" value="F:tRNA binding"/>
    <property type="evidence" value="ECO:0007669"/>
    <property type="project" value="UniProtKB-KW"/>
</dbReference>
<dbReference type="GO" id="GO:0006432">
    <property type="term" value="P:phenylalanyl-tRNA aminoacylation"/>
    <property type="evidence" value="ECO:0007669"/>
    <property type="project" value="UniProtKB-UniRule"/>
</dbReference>
<dbReference type="CDD" id="cd00769">
    <property type="entry name" value="PheRS_beta_core"/>
    <property type="match status" value="1"/>
</dbReference>
<dbReference type="CDD" id="cd02796">
    <property type="entry name" value="tRNA_bind_bactPheRS"/>
    <property type="match status" value="1"/>
</dbReference>
<dbReference type="FunFam" id="2.40.50.140:FF:000045">
    <property type="entry name" value="Phenylalanine--tRNA ligase beta subunit"/>
    <property type="match status" value="1"/>
</dbReference>
<dbReference type="FunFam" id="3.30.70.380:FF:000001">
    <property type="entry name" value="Phenylalanine--tRNA ligase beta subunit"/>
    <property type="match status" value="1"/>
</dbReference>
<dbReference type="FunFam" id="3.30.930.10:FF:000022">
    <property type="entry name" value="Phenylalanine--tRNA ligase beta subunit"/>
    <property type="match status" value="1"/>
</dbReference>
<dbReference type="FunFam" id="3.50.40.10:FF:000001">
    <property type="entry name" value="Phenylalanine--tRNA ligase beta subunit"/>
    <property type="match status" value="1"/>
</dbReference>
<dbReference type="Gene3D" id="3.30.56.10">
    <property type="match status" value="2"/>
</dbReference>
<dbReference type="Gene3D" id="3.30.930.10">
    <property type="entry name" value="Bira Bifunctional Protein, Domain 2"/>
    <property type="match status" value="1"/>
</dbReference>
<dbReference type="Gene3D" id="3.30.70.380">
    <property type="entry name" value="Ferrodoxin-fold anticodon-binding domain"/>
    <property type="match status" value="1"/>
</dbReference>
<dbReference type="Gene3D" id="2.40.50.140">
    <property type="entry name" value="Nucleic acid-binding proteins"/>
    <property type="match status" value="1"/>
</dbReference>
<dbReference type="Gene3D" id="3.50.40.10">
    <property type="entry name" value="Phenylalanyl-trna Synthetase, Chain B, domain 3"/>
    <property type="match status" value="1"/>
</dbReference>
<dbReference type="HAMAP" id="MF_00283">
    <property type="entry name" value="Phe_tRNA_synth_beta1"/>
    <property type="match status" value="1"/>
</dbReference>
<dbReference type="InterPro" id="IPR045864">
    <property type="entry name" value="aa-tRNA-synth_II/BPL/LPL"/>
</dbReference>
<dbReference type="InterPro" id="IPR005146">
    <property type="entry name" value="B3/B4_tRNA-bd"/>
</dbReference>
<dbReference type="InterPro" id="IPR009061">
    <property type="entry name" value="DNA-bd_dom_put_sf"/>
</dbReference>
<dbReference type="InterPro" id="IPR005121">
    <property type="entry name" value="Fdx_antiC-bd"/>
</dbReference>
<dbReference type="InterPro" id="IPR036690">
    <property type="entry name" value="Fdx_antiC-bd_sf"/>
</dbReference>
<dbReference type="InterPro" id="IPR012340">
    <property type="entry name" value="NA-bd_OB-fold"/>
</dbReference>
<dbReference type="InterPro" id="IPR045060">
    <property type="entry name" value="Phe-tRNA-ligase_IIc_bsu"/>
</dbReference>
<dbReference type="InterPro" id="IPR004532">
    <property type="entry name" value="Phe-tRNA-ligase_IIc_bsu_bact"/>
</dbReference>
<dbReference type="InterPro" id="IPR020825">
    <property type="entry name" value="Phe-tRNA_synthase-like_B3/B4"/>
</dbReference>
<dbReference type="InterPro" id="IPR041616">
    <property type="entry name" value="PheRS_beta_core"/>
</dbReference>
<dbReference type="InterPro" id="IPR002547">
    <property type="entry name" value="tRNA-bd_dom"/>
</dbReference>
<dbReference type="InterPro" id="IPR033714">
    <property type="entry name" value="tRNA_bind_bactPheRS"/>
</dbReference>
<dbReference type="InterPro" id="IPR005147">
    <property type="entry name" value="tRNA_synthase_B5-dom"/>
</dbReference>
<dbReference type="NCBIfam" id="TIGR00472">
    <property type="entry name" value="pheT_bact"/>
    <property type="match status" value="1"/>
</dbReference>
<dbReference type="NCBIfam" id="NF045760">
    <property type="entry name" value="YtpR"/>
    <property type="match status" value="1"/>
</dbReference>
<dbReference type="PANTHER" id="PTHR10947:SF0">
    <property type="entry name" value="PHENYLALANINE--TRNA LIGASE BETA SUBUNIT"/>
    <property type="match status" value="1"/>
</dbReference>
<dbReference type="PANTHER" id="PTHR10947">
    <property type="entry name" value="PHENYLALANYL-TRNA SYNTHETASE BETA CHAIN AND LEUCINE-RICH REPEAT-CONTAINING PROTEIN 47"/>
    <property type="match status" value="1"/>
</dbReference>
<dbReference type="Pfam" id="PF03483">
    <property type="entry name" value="B3_4"/>
    <property type="match status" value="1"/>
</dbReference>
<dbReference type="Pfam" id="PF03484">
    <property type="entry name" value="B5"/>
    <property type="match status" value="1"/>
</dbReference>
<dbReference type="Pfam" id="PF03147">
    <property type="entry name" value="FDX-ACB"/>
    <property type="match status" value="1"/>
</dbReference>
<dbReference type="Pfam" id="PF01588">
    <property type="entry name" value="tRNA_bind"/>
    <property type="match status" value="1"/>
</dbReference>
<dbReference type="Pfam" id="PF17759">
    <property type="entry name" value="tRNA_synthFbeta"/>
    <property type="match status" value="1"/>
</dbReference>
<dbReference type="SMART" id="SM00873">
    <property type="entry name" value="B3_4"/>
    <property type="match status" value="1"/>
</dbReference>
<dbReference type="SMART" id="SM00874">
    <property type="entry name" value="B5"/>
    <property type="match status" value="1"/>
</dbReference>
<dbReference type="SMART" id="SM00896">
    <property type="entry name" value="FDX-ACB"/>
    <property type="match status" value="1"/>
</dbReference>
<dbReference type="SUPFAM" id="SSF54991">
    <property type="entry name" value="Anticodon-binding domain of PheRS"/>
    <property type="match status" value="1"/>
</dbReference>
<dbReference type="SUPFAM" id="SSF55681">
    <property type="entry name" value="Class II aaRS and biotin synthetases"/>
    <property type="match status" value="1"/>
</dbReference>
<dbReference type="SUPFAM" id="SSF50249">
    <property type="entry name" value="Nucleic acid-binding proteins"/>
    <property type="match status" value="1"/>
</dbReference>
<dbReference type="SUPFAM" id="SSF56037">
    <property type="entry name" value="PheT/TilS domain"/>
    <property type="match status" value="1"/>
</dbReference>
<dbReference type="SUPFAM" id="SSF46955">
    <property type="entry name" value="Putative DNA-binding domain"/>
    <property type="match status" value="1"/>
</dbReference>
<dbReference type="PROSITE" id="PS51483">
    <property type="entry name" value="B5"/>
    <property type="match status" value="1"/>
</dbReference>
<dbReference type="PROSITE" id="PS51447">
    <property type="entry name" value="FDX_ACB"/>
    <property type="match status" value="1"/>
</dbReference>
<dbReference type="PROSITE" id="PS50886">
    <property type="entry name" value="TRBD"/>
    <property type="match status" value="1"/>
</dbReference>
<feature type="chain" id="PRO_0000126961" description="Phenylalanine--tRNA ligase beta subunit">
    <location>
        <begin position="1"/>
        <end position="801"/>
    </location>
</feature>
<feature type="domain" description="tRNA-binding" evidence="1">
    <location>
        <begin position="39"/>
        <end position="153"/>
    </location>
</feature>
<feature type="domain" description="B5" evidence="1">
    <location>
        <begin position="406"/>
        <end position="481"/>
    </location>
</feature>
<feature type="domain" description="FDX-ACB" evidence="1">
    <location>
        <begin position="708"/>
        <end position="801"/>
    </location>
</feature>
<feature type="binding site" evidence="1">
    <location>
        <position position="459"/>
    </location>
    <ligand>
        <name>Mg(2+)</name>
        <dbReference type="ChEBI" id="CHEBI:18420"/>
        <note>shared with alpha subunit</note>
    </ligand>
</feature>
<feature type="binding site" evidence="1">
    <location>
        <position position="465"/>
    </location>
    <ligand>
        <name>Mg(2+)</name>
        <dbReference type="ChEBI" id="CHEBI:18420"/>
        <note>shared with alpha subunit</note>
    </ligand>
</feature>
<feature type="binding site" evidence="1">
    <location>
        <position position="468"/>
    </location>
    <ligand>
        <name>Mg(2+)</name>
        <dbReference type="ChEBI" id="CHEBI:18420"/>
        <note>shared with alpha subunit</note>
    </ligand>
</feature>
<feature type="binding site" evidence="1">
    <location>
        <position position="469"/>
    </location>
    <ligand>
        <name>Mg(2+)</name>
        <dbReference type="ChEBI" id="CHEBI:18420"/>
        <note>shared with alpha subunit</note>
    </ligand>
</feature>
<name>SYFB_STRMU</name>
<proteinExistence type="inferred from homology"/>
<organism>
    <name type="scientific">Streptococcus mutans serotype c (strain ATCC 700610 / UA159)</name>
    <dbReference type="NCBI Taxonomy" id="210007"/>
    <lineage>
        <taxon>Bacteria</taxon>
        <taxon>Bacillati</taxon>
        <taxon>Bacillota</taxon>
        <taxon>Bacilli</taxon>
        <taxon>Lactobacillales</taxon>
        <taxon>Streptococcaceae</taxon>
        <taxon>Streptococcus</taxon>
    </lineage>
</organism>
<evidence type="ECO:0000255" key="1">
    <source>
        <dbReference type="HAMAP-Rule" id="MF_00283"/>
    </source>
</evidence>
<comment type="catalytic activity">
    <reaction evidence="1">
        <text>tRNA(Phe) + L-phenylalanine + ATP = L-phenylalanyl-tRNA(Phe) + AMP + diphosphate + H(+)</text>
        <dbReference type="Rhea" id="RHEA:19413"/>
        <dbReference type="Rhea" id="RHEA-COMP:9668"/>
        <dbReference type="Rhea" id="RHEA-COMP:9699"/>
        <dbReference type="ChEBI" id="CHEBI:15378"/>
        <dbReference type="ChEBI" id="CHEBI:30616"/>
        <dbReference type="ChEBI" id="CHEBI:33019"/>
        <dbReference type="ChEBI" id="CHEBI:58095"/>
        <dbReference type="ChEBI" id="CHEBI:78442"/>
        <dbReference type="ChEBI" id="CHEBI:78531"/>
        <dbReference type="ChEBI" id="CHEBI:456215"/>
        <dbReference type="EC" id="6.1.1.20"/>
    </reaction>
</comment>
<comment type="cofactor">
    <cofactor evidence="1">
        <name>Mg(2+)</name>
        <dbReference type="ChEBI" id="CHEBI:18420"/>
    </cofactor>
    <text evidence="1">Binds 2 magnesium ions per tetramer.</text>
</comment>
<comment type="subunit">
    <text evidence="1">Tetramer of two alpha and two beta subunits.</text>
</comment>
<comment type="subcellular location">
    <subcellularLocation>
        <location>Cytoplasm</location>
    </subcellularLocation>
</comment>
<comment type="similarity">
    <text evidence="1">Belongs to the phenylalanyl-tRNA synthetase beta subunit family. Type 1 subfamily.</text>
</comment>
<protein>
    <recommendedName>
        <fullName evidence="1">Phenylalanine--tRNA ligase beta subunit</fullName>
        <ecNumber evidence="1">6.1.1.20</ecNumber>
    </recommendedName>
    <alternativeName>
        <fullName evidence="1">Phenylalanyl-tRNA synthetase beta subunit</fullName>
        <shortName evidence="1">PheRS</shortName>
    </alternativeName>
</protein>
<sequence>MLVSYKWLKELVDIDVPSHELAEKMSTTGIEVEGVDVPAEGLSKLVVGHVLSCEDVPETHLHLCQVDTGEEESRQIVCGAPNITAGIKVIVALPGARIADNYKIKKGKIRGMESLGMICSLQELGLPDSIIPKEYSDGIQILPEDAVPGESIFPYLDLDDEIIELSITPNRADALSMRGVAHEVAAIYDKSVHFEDKVLTESDKKAADLIKVAIASDKVLTYKARVVENVTIKPSPQWLQNLLMNAGIRPINNVVDVTNYVLLYFGQPMHAFDLDKFEGKDILARQAKAGEKLVTLDGEARDLIEEDLVITVADKPVALAGVMGGAATEIDASSKNVVLEAAVFDGKSVRKTSSRLNLRSESSSRFEKGVNYADVVKALDFAAAMLTELADGTVLAGQVSAGAVPTDDIQVSTSLDYVNVRLGTDLVFSDIESVFARLGFGLSGNDEKFTVSVPRRRWDISIQADLVEEIARIYGYDKLPTTLPEAAGTVGELTKTQKLRRKIRNLAEGSGLSEIISYALTTPEKAVAFTPNPTKITELMWPMTVDRSALRQNIVSGMLDTIAYNVARKSNNLALYEIGKVFEQTADPKKDLPKEIDTFAFALTGLVTEKDFQTAATPVDFFYAKGVLEAILAKLEITVQFVATKEMANMHPGRTALIERDGQVIGYLGQVHPQTAKLYDIPETYVAEVNLNALEAALKSDLVFEDITKFPAVSRDIALLLSEKVSHQDILDAIAASGVKRLIKVKLFDVYAGEKLGVGKKSMAYSLTFQNPNDNLTDEEVAKYMEKITSALTEKVGAEVR</sequence>
<keyword id="KW-0030">Aminoacyl-tRNA synthetase</keyword>
<keyword id="KW-0067">ATP-binding</keyword>
<keyword id="KW-0963">Cytoplasm</keyword>
<keyword id="KW-0436">Ligase</keyword>
<keyword id="KW-0460">Magnesium</keyword>
<keyword id="KW-0479">Metal-binding</keyword>
<keyword id="KW-0547">Nucleotide-binding</keyword>
<keyword id="KW-0648">Protein biosynthesis</keyword>
<keyword id="KW-1185">Reference proteome</keyword>
<keyword id="KW-0694">RNA-binding</keyword>
<keyword id="KW-0820">tRNA-binding</keyword>
<accession>Q8CWX2</accession>
<reference key="1">
    <citation type="journal article" date="2002" name="Proc. Natl. Acad. Sci. U.S.A.">
        <title>Genome sequence of Streptococcus mutans UA159, a cariogenic dental pathogen.</title>
        <authorList>
            <person name="Ajdic D.J."/>
            <person name="McShan W.M."/>
            <person name="McLaughlin R.E."/>
            <person name="Savic G."/>
            <person name="Chang J."/>
            <person name="Carson M.B."/>
            <person name="Primeaux C."/>
            <person name="Tian R."/>
            <person name="Kenton S."/>
            <person name="Jia H.G."/>
            <person name="Lin S.P."/>
            <person name="Qian Y."/>
            <person name="Li S."/>
            <person name="Zhu H."/>
            <person name="Najar F.Z."/>
            <person name="Lai H."/>
            <person name="White J."/>
            <person name="Roe B.A."/>
            <person name="Ferretti J.J."/>
        </authorList>
    </citation>
    <scope>NUCLEOTIDE SEQUENCE [LARGE SCALE GENOMIC DNA]</scope>
    <source>
        <strain>ATCC 700610 / UA159</strain>
    </source>
</reference>